<evidence type="ECO:0000255" key="1">
    <source>
        <dbReference type="PROSITE-ProRule" id="PRU00361"/>
    </source>
</evidence>
<protein>
    <recommendedName>
        <fullName>Hydatid disease diagnostic antigen P-29</fullName>
    </recommendedName>
</protein>
<feature type="chain" id="PRO_0000192962" description="Hydatid disease diagnostic antigen P-29">
    <location>
        <begin position="1"/>
        <end position="238"/>
    </location>
</feature>
<feature type="domain" description="BAR" evidence="1">
    <location>
        <begin position="18"/>
        <end position="238"/>
    </location>
</feature>
<keyword id="KW-0903">Direct protein sequencing</keyword>
<organism>
    <name type="scientific">Echinococcus granulosus</name>
    <name type="common">Hydatid tapeworm</name>
    <dbReference type="NCBI Taxonomy" id="6210"/>
    <lineage>
        <taxon>Eukaryota</taxon>
        <taxon>Metazoa</taxon>
        <taxon>Spiralia</taxon>
        <taxon>Lophotrochozoa</taxon>
        <taxon>Platyhelminthes</taxon>
        <taxon>Cestoda</taxon>
        <taxon>Eucestoda</taxon>
        <taxon>Cyclophyllidea</taxon>
        <taxon>Taeniidae</taxon>
        <taxon>Echinococcus</taxon>
        <taxon>Echinococcus granulosus group</taxon>
    </lineage>
</organism>
<proteinExistence type="evidence at protein level"/>
<dbReference type="EMBL" id="AF078931">
    <property type="protein sequence ID" value="AAD53328.1"/>
    <property type="molecule type" value="mRNA"/>
</dbReference>
<dbReference type="RefSeq" id="XP_024351425.1">
    <property type="nucleotide sequence ID" value="XM_024494188.1"/>
</dbReference>
<dbReference type="SMR" id="Q9U8G7"/>
<dbReference type="EnsemblMetazoa" id="XM_024494188.1">
    <property type="protein sequence ID" value="XP_024351425.1"/>
    <property type="gene ID" value="GeneID_36340654"/>
</dbReference>
<dbReference type="GeneID" id="36340654"/>
<dbReference type="OMA" id="CAKECSM"/>
<dbReference type="OrthoDB" id="14167at2759"/>
<dbReference type="Proteomes" id="UP000492820">
    <property type="component" value="Unplaced"/>
</dbReference>
<dbReference type="GO" id="GO:0005737">
    <property type="term" value="C:cytoplasm"/>
    <property type="evidence" value="ECO:0007669"/>
    <property type="project" value="InterPro"/>
</dbReference>
<dbReference type="Gene3D" id="1.20.1270.60">
    <property type="entry name" value="Arfaptin homology (AH) domain/BAR domain"/>
    <property type="match status" value="1"/>
</dbReference>
<dbReference type="InterPro" id="IPR027267">
    <property type="entry name" value="AH/BAR_dom_sf"/>
</dbReference>
<dbReference type="InterPro" id="IPR004148">
    <property type="entry name" value="BAR_dom"/>
</dbReference>
<dbReference type="Pfam" id="PF03114">
    <property type="entry name" value="BAR"/>
    <property type="match status" value="1"/>
</dbReference>
<dbReference type="SMART" id="SM00721">
    <property type="entry name" value="BAR"/>
    <property type="match status" value="1"/>
</dbReference>
<dbReference type="SUPFAM" id="SSF103657">
    <property type="entry name" value="BAR/IMD domain-like"/>
    <property type="match status" value="1"/>
</dbReference>
<dbReference type="PROSITE" id="PS51021">
    <property type="entry name" value="BAR"/>
    <property type="match status" value="1"/>
</dbReference>
<reference key="1">
    <citation type="journal article" date="2000" name="Mol. Biochem. Parasitol.">
        <title>Molecular characterization of P-29, a metacestode-specific component of Echinococcus granulosus which is immunologically related to, but distinct from, antigen 5.</title>
        <authorList>
            <person name="Gonzalez G."/>
            <person name="Spinelli P."/>
            <person name="Lorenzo C."/>
            <person name="Hellman U."/>
            <person name="Nieto A."/>
            <person name="Willis A."/>
            <person name="Salinas G."/>
        </authorList>
    </citation>
    <scope>NUCLEOTIDE SEQUENCE [MRNA]</scope>
    <scope>PARTIAL PROTEIN SEQUENCE</scope>
</reference>
<name>P29_ECHGR</name>
<comment type="developmental stage">
    <text>Metacestode-specific.</text>
</comment>
<sequence length="238" mass="27097">MSGFDVTKTFNRFTQRAGELVNKNEKTSYPTRTSDLIHEIDQMKAWISKIITATEEFVDINIASKVADAFQKNKEKITTTDKLGTALEQVASQSEKAAPQLSKMLTEASDVHQRMATARKNFNSEVNTTFIEDLKNFLNTTLSEAQKAKTKLEEVRLDLDSDKTKLKNAKTAEQKAKWEAEVRKDESDFDRVHQESLTIFEKTCKEFDGLSVQLLDLIRAEKNYYEACAKECSMMLGE</sequence>
<accession>Q9U8G7</accession>